<reference key="1">
    <citation type="journal article" date="1988" name="Nucleic Acids Res.">
        <title>The nucleotide sequence of potato virus X RNA.</title>
        <authorList>
            <person name="Skryabin K.G."/>
            <person name="Kraev A.S."/>
            <person name="Morozov S.Y."/>
            <person name="Rozanov M.N."/>
            <person name="Chernov B.K."/>
            <person name="Lukasheva L.I."/>
            <person name="Atabekov J.G."/>
        </authorList>
    </citation>
    <scope>NUCLEOTIDE SEQUENCE [GENOMIC RNA]</scope>
</reference>
<reference key="2">
    <citation type="journal article" date="1987" name="FEBS Lett.">
        <title>Nucleotide sequence of the open reading frames adjacent to the coat protein cistron in potato virus X genome.</title>
        <authorList>
            <person name="Morozov S.Y."/>
            <person name="Lukasheva L.I."/>
            <person name="Chernov B.K."/>
            <person name="Skryabin K.G."/>
            <person name="Atabekov J.G."/>
        </authorList>
    </citation>
    <scope>NUCLEOTIDE SEQUENCE [GENOMIC RNA]</scope>
</reference>
<reference key="3">
    <citation type="journal article" date="2005" name="Mol. Plant Microbe Interact.">
        <title>A new cell-to-cell transport model for Potexviruses.</title>
        <authorList>
            <person name="Verchot-Lubicz J."/>
        </authorList>
    </citation>
    <scope>REVIEW</scope>
</reference>
<keyword id="KW-0167">Capsid protein</keyword>
<keyword id="KW-1139">Helical capsid protein</keyword>
<keyword id="KW-0687">Ribonucleoprotein</keyword>
<keyword id="KW-0946">Virion</keyword>
<proteinExistence type="inferred from homology"/>
<sequence>MSAPASTTQATGSTTSTTTKTAGATPATASGLFTIPDGDFFSTARAVVASDAVATNEDLSEIEAVWKDMKVPTDTMAQAAWDLVRHCADVGSSAQTEMIDTGPYSNGISRARLAAAIKEVCTLRQFCMKYAPVVWNWMLTNNSPPANWQAQGFKPEHKFAAFDFFNGVTNPAAIMPKEGLIRPPSEAEMNAAQTAAFVKITKARAQSNDFASLDAAVTRGRITGTTTAEAVVTLPPP</sequence>
<comment type="function">
    <text>Required for genome encapsidation. Forms ribonucleoprotein complexes along with TGB1 helicase and viral RNA.</text>
</comment>
<comment type="subcellular location">
    <subcellularLocation>
        <location evidence="2">Virion</location>
    </subcellularLocation>
</comment>
<comment type="similarity">
    <text evidence="2">Belongs to the potexvirus capsid protein family.</text>
</comment>
<dbReference type="EMBL" id="M72416">
    <property type="protein sequence ID" value="AAA47171.1"/>
    <property type="molecule type" value="Genomic_RNA"/>
</dbReference>
<dbReference type="SMR" id="P07699"/>
<dbReference type="Proteomes" id="UP000006841">
    <property type="component" value="Genome"/>
</dbReference>
<dbReference type="GO" id="GO:0019029">
    <property type="term" value="C:helical viral capsid"/>
    <property type="evidence" value="ECO:0007669"/>
    <property type="project" value="UniProtKB-KW"/>
</dbReference>
<dbReference type="GO" id="GO:1990904">
    <property type="term" value="C:ribonucleoprotein complex"/>
    <property type="evidence" value="ECO:0007669"/>
    <property type="project" value="UniProtKB-KW"/>
</dbReference>
<dbReference type="GO" id="GO:0005198">
    <property type="term" value="F:structural molecule activity"/>
    <property type="evidence" value="ECO:0007669"/>
    <property type="project" value="InterPro"/>
</dbReference>
<dbReference type="InterPro" id="IPR000052">
    <property type="entry name" value="Pltvir_coat"/>
</dbReference>
<dbReference type="Pfam" id="PF00286">
    <property type="entry name" value="Flexi_CP"/>
    <property type="match status" value="1"/>
</dbReference>
<dbReference type="PRINTS" id="PR00232">
    <property type="entry name" value="POTXCARLCOAT"/>
</dbReference>
<dbReference type="PROSITE" id="PS00418">
    <property type="entry name" value="POTEX_CARLAVIRUS_COAT"/>
    <property type="match status" value="1"/>
</dbReference>
<accession>P07699</accession>
<protein>
    <recommendedName>
        <fullName>Coat protein</fullName>
    </recommendedName>
    <alternativeName>
        <fullName>Capsid protein</fullName>
        <shortName>CP</shortName>
    </alternativeName>
</protein>
<name>CAPSD_PVX</name>
<organismHost>
    <name type="scientific">Brassica campestris</name>
    <name type="common">Field mustard</name>
    <dbReference type="NCBI Taxonomy" id="3711"/>
</organismHost>
<organismHost>
    <name type="scientific">Solanum tuberosum</name>
    <name type="common">Potato</name>
    <dbReference type="NCBI Taxonomy" id="4113"/>
</organismHost>
<evidence type="ECO:0000256" key="1">
    <source>
        <dbReference type="SAM" id="MobiDB-lite"/>
    </source>
</evidence>
<evidence type="ECO:0000305" key="2"/>
<organism>
    <name type="scientific">Potato virus X</name>
    <name type="common">PVX</name>
    <dbReference type="NCBI Taxonomy" id="12183"/>
    <lineage>
        <taxon>Viruses</taxon>
        <taxon>Riboviria</taxon>
        <taxon>Orthornavirae</taxon>
        <taxon>Kitrinoviricota</taxon>
        <taxon>Alsuviricetes</taxon>
        <taxon>Tymovirales</taxon>
        <taxon>Alphaflexiviridae</taxon>
        <taxon>Potexvirus</taxon>
    </lineage>
</organism>
<feature type="chain" id="PRO_0000222625" description="Coat protein">
    <location>
        <begin position="1"/>
        <end position="237"/>
    </location>
</feature>
<feature type="region of interest" description="Disordered" evidence="1">
    <location>
        <begin position="1"/>
        <end position="28"/>
    </location>
</feature>